<organism>
    <name type="scientific">Nitratidesulfovibrio vulgaris (strain DSM 19637 / Miyazaki F)</name>
    <name type="common">Desulfovibrio vulgaris</name>
    <dbReference type="NCBI Taxonomy" id="883"/>
    <lineage>
        <taxon>Bacteria</taxon>
        <taxon>Pseudomonadati</taxon>
        <taxon>Thermodesulfobacteriota</taxon>
        <taxon>Desulfovibrionia</taxon>
        <taxon>Desulfovibrionales</taxon>
        <taxon>Desulfovibrionaceae</taxon>
        <taxon>Nitratidesulfovibrio</taxon>
    </lineage>
</organism>
<gene>
    <name evidence="1" type="primary">rpsT</name>
    <name type="ordered locus">DvMF_0292</name>
</gene>
<dbReference type="EMBL" id="CP001197">
    <property type="protein sequence ID" value="ACL07249.1"/>
    <property type="molecule type" value="Genomic_DNA"/>
</dbReference>
<dbReference type="SMR" id="B8DPG2"/>
<dbReference type="STRING" id="883.DvMF_0292"/>
<dbReference type="KEGG" id="dvm:DvMF_0292"/>
<dbReference type="eggNOG" id="COG0268">
    <property type="taxonomic scope" value="Bacteria"/>
</dbReference>
<dbReference type="HOGENOM" id="CLU_160655_3_1_7"/>
<dbReference type="OrthoDB" id="9807974at2"/>
<dbReference type="GO" id="GO:0005829">
    <property type="term" value="C:cytosol"/>
    <property type="evidence" value="ECO:0007669"/>
    <property type="project" value="TreeGrafter"/>
</dbReference>
<dbReference type="GO" id="GO:0015935">
    <property type="term" value="C:small ribosomal subunit"/>
    <property type="evidence" value="ECO:0007669"/>
    <property type="project" value="TreeGrafter"/>
</dbReference>
<dbReference type="GO" id="GO:0070181">
    <property type="term" value="F:small ribosomal subunit rRNA binding"/>
    <property type="evidence" value="ECO:0007669"/>
    <property type="project" value="TreeGrafter"/>
</dbReference>
<dbReference type="GO" id="GO:0003735">
    <property type="term" value="F:structural constituent of ribosome"/>
    <property type="evidence" value="ECO:0007669"/>
    <property type="project" value="InterPro"/>
</dbReference>
<dbReference type="GO" id="GO:0006412">
    <property type="term" value="P:translation"/>
    <property type="evidence" value="ECO:0007669"/>
    <property type="project" value="UniProtKB-UniRule"/>
</dbReference>
<dbReference type="FunFam" id="1.20.58.110:FF:000001">
    <property type="entry name" value="30S ribosomal protein S20"/>
    <property type="match status" value="1"/>
</dbReference>
<dbReference type="Gene3D" id="1.20.58.110">
    <property type="entry name" value="Ribosomal protein S20"/>
    <property type="match status" value="1"/>
</dbReference>
<dbReference type="HAMAP" id="MF_00500">
    <property type="entry name" value="Ribosomal_bS20"/>
    <property type="match status" value="1"/>
</dbReference>
<dbReference type="InterPro" id="IPR002583">
    <property type="entry name" value="Ribosomal_bS20"/>
</dbReference>
<dbReference type="InterPro" id="IPR036510">
    <property type="entry name" value="Ribosomal_bS20_sf"/>
</dbReference>
<dbReference type="NCBIfam" id="TIGR00029">
    <property type="entry name" value="S20"/>
    <property type="match status" value="1"/>
</dbReference>
<dbReference type="PANTHER" id="PTHR33398">
    <property type="entry name" value="30S RIBOSOMAL PROTEIN S20"/>
    <property type="match status" value="1"/>
</dbReference>
<dbReference type="PANTHER" id="PTHR33398:SF1">
    <property type="entry name" value="SMALL RIBOSOMAL SUBUNIT PROTEIN BS20C"/>
    <property type="match status" value="1"/>
</dbReference>
<dbReference type="Pfam" id="PF01649">
    <property type="entry name" value="Ribosomal_S20p"/>
    <property type="match status" value="1"/>
</dbReference>
<dbReference type="SUPFAM" id="SSF46992">
    <property type="entry name" value="Ribosomal protein S20"/>
    <property type="match status" value="1"/>
</dbReference>
<proteinExistence type="inferred from homology"/>
<evidence type="ECO:0000255" key="1">
    <source>
        <dbReference type="HAMAP-Rule" id="MF_00500"/>
    </source>
</evidence>
<evidence type="ECO:0000256" key="2">
    <source>
        <dbReference type="SAM" id="MobiDB-lite"/>
    </source>
</evidence>
<evidence type="ECO:0000305" key="3"/>
<name>RS20_NITV9</name>
<protein>
    <recommendedName>
        <fullName evidence="1">Small ribosomal subunit protein bS20</fullName>
    </recommendedName>
    <alternativeName>
        <fullName evidence="3">30S ribosomal protein S20</fullName>
    </alternativeName>
</protein>
<reference key="1">
    <citation type="submission" date="2008-10" db="EMBL/GenBank/DDBJ databases">
        <title>Complete sequence of Desulfovibrio vulgaris str. 'Miyazaki F'.</title>
        <authorList>
            <person name="Lucas S."/>
            <person name="Copeland A."/>
            <person name="Lapidus A."/>
            <person name="Glavina del Rio T."/>
            <person name="Dalin E."/>
            <person name="Tice H."/>
            <person name="Bruce D."/>
            <person name="Goodwin L."/>
            <person name="Pitluck S."/>
            <person name="Sims D."/>
            <person name="Brettin T."/>
            <person name="Detter J.C."/>
            <person name="Han C."/>
            <person name="Larimer F."/>
            <person name="Land M."/>
            <person name="Hauser L."/>
            <person name="Kyrpides N."/>
            <person name="Mikhailova N."/>
            <person name="Hazen T.C."/>
            <person name="Richardson P."/>
        </authorList>
    </citation>
    <scope>NUCLEOTIDE SEQUENCE [LARGE SCALE GENOMIC DNA]</scope>
    <source>
        <strain>DSM 19637 / Miyazaki F</strain>
    </source>
</reference>
<keyword id="KW-0687">Ribonucleoprotein</keyword>
<keyword id="KW-0689">Ribosomal protein</keyword>
<keyword id="KW-0694">RNA-binding</keyword>
<keyword id="KW-0699">rRNA-binding</keyword>
<sequence>MANHKSAIKRHKQSQKRAARNRAAKTRIKNVVKAVRAAVLQKDKDTAAQALTAAMSVLDKAAGKGVIHWKKAARKISRLTKAVGSVE</sequence>
<accession>B8DPG2</accession>
<feature type="chain" id="PRO_1000126435" description="Small ribosomal subunit protein bS20">
    <location>
        <begin position="1"/>
        <end position="87"/>
    </location>
</feature>
<feature type="region of interest" description="Disordered" evidence="2">
    <location>
        <begin position="1"/>
        <end position="26"/>
    </location>
</feature>
<comment type="function">
    <text evidence="1">Binds directly to 16S ribosomal RNA.</text>
</comment>
<comment type="similarity">
    <text evidence="1">Belongs to the bacterial ribosomal protein bS20 family.</text>
</comment>